<keyword id="KW-0963">Cytoplasm</keyword>
<keyword id="KW-0460">Magnesium</keyword>
<keyword id="KW-0479">Metal-binding</keyword>
<keyword id="KW-0548">Nucleotidyltransferase</keyword>
<keyword id="KW-0694">RNA-binding</keyword>
<keyword id="KW-0808">Transferase</keyword>
<proteinExistence type="inferred from homology"/>
<organism>
    <name type="scientific">Enterobacter sp. (strain 638)</name>
    <dbReference type="NCBI Taxonomy" id="399742"/>
    <lineage>
        <taxon>Bacteria</taxon>
        <taxon>Pseudomonadati</taxon>
        <taxon>Pseudomonadota</taxon>
        <taxon>Gammaproteobacteria</taxon>
        <taxon>Enterobacterales</taxon>
        <taxon>Enterobacteriaceae</taxon>
        <taxon>Enterobacter</taxon>
    </lineage>
</organism>
<protein>
    <recommendedName>
        <fullName evidence="1">Polyribonucleotide nucleotidyltransferase</fullName>
        <ecNumber evidence="1">2.7.7.8</ecNumber>
    </recommendedName>
    <alternativeName>
        <fullName evidence="1">Polynucleotide phosphorylase</fullName>
        <shortName evidence="1">PNPase</shortName>
    </alternativeName>
</protein>
<reference key="1">
    <citation type="journal article" date="2010" name="PLoS Genet.">
        <title>Genome sequence of the plant growth promoting endophytic bacterium Enterobacter sp. 638.</title>
        <authorList>
            <person name="Taghavi S."/>
            <person name="van der Lelie D."/>
            <person name="Hoffman A."/>
            <person name="Zhang Y.B."/>
            <person name="Walla M.D."/>
            <person name="Vangronsveld J."/>
            <person name="Newman L."/>
            <person name="Monchy S."/>
        </authorList>
    </citation>
    <scope>NUCLEOTIDE SEQUENCE [LARGE SCALE GENOMIC DNA]</scope>
    <source>
        <strain>638</strain>
    </source>
</reference>
<comment type="function">
    <text evidence="1">Involved in mRNA degradation. Catalyzes the phosphorolysis of single-stranded polyribonucleotides processively in the 3'- to 5'-direction.</text>
</comment>
<comment type="catalytic activity">
    <reaction evidence="1">
        <text>RNA(n+1) + phosphate = RNA(n) + a ribonucleoside 5'-diphosphate</text>
        <dbReference type="Rhea" id="RHEA:22096"/>
        <dbReference type="Rhea" id="RHEA-COMP:14527"/>
        <dbReference type="Rhea" id="RHEA-COMP:17342"/>
        <dbReference type="ChEBI" id="CHEBI:43474"/>
        <dbReference type="ChEBI" id="CHEBI:57930"/>
        <dbReference type="ChEBI" id="CHEBI:140395"/>
        <dbReference type="EC" id="2.7.7.8"/>
    </reaction>
</comment>
<comment type="cofactor">
    <cofactor evidence="1">
        <name>Mg(2+)</name>
        <dbReference type="ChEBI" id="CHEBI:18420"/>
    </cofactor>
</comment>
<comment type="subunit">
    <text evidence="1">Component of the RNA degradosome, which is a multiprotein complex involved in RNA processing and mRNA degradation.</text>
</comment>
<comment type="subcellular location">
    <subcellularLocation>
        <location evidence="1">Cytoplasm</location>
    </subcellularLocation>
</comment>
<comment type="similarity">
    <text evidence="1">Belongs to the polyribonucleotide nucleotidyltransferase family.</text>
</comment>
<accession>A4WEX9</accession>
<name>PNP_ENT38</name>
<dbReference type="EC" id="2.7.7.8" evidence="1"/>
<dbReference type="EMBL" id="CP000653">
    <property type="protein sequence ID" value="ABP62259.1"/>
    <property type="molecule type" value="Genomic_DNA"/>
</dbReference>
<dbReference type="RefSeq" id="WP_015960585.1">
    <property type="nucleotide sequence ID" value="NC_009436.1"/>
</dbReference>
<dbReference type="SMR" id="A4WEX9"/>
<dbReference type="STRING" id="399742.Ent638_3601"/>
<dbReference type="KEGG" id="ent:Ent638_3601"/>
<dbReference type="eggNOG" id="COG1185">
    <property type="taxonomic scope" value="Bacteria"/>
</dbReference>
<dbReference type="HOGENOM" id="CLU_004217_2_2_6"/>
<dbReference type="OrthoDB" id="9804305at2"/>
<dbReference type="Proteomes" id="UP000000230">
    <property type="component" value="Chromosome"/>
</dbReference>
<dbReference type="GO" id="GO:0005829">
    <property type="term" value="C:cytosol"/>
    <property type="evidence" value="ECO:0007669"/>
    <property type="project" value="TreeGrafter"/>
</dbReference>
<dbReference type="GO" id="GO:0000175">
    <property type="term" value="F:3'-5'-RNA exonuclease activity"/>
    <property type="evidence" value="ECO:0007669"/>
    <property type="project" value="TreeGrafter"/>
</dbReference>
<dbReference type="GO" id="GO:0000287">
    <property type="term" value="F:magnesium ion binding"/>
    <property type="evidence" value="ECO:0007669"/>
    <property type="project" value="UniProtKB-UniRule"/>
</dbReference>
<dbReference type="GO" id="GO:0004654">
    <property type="term" value="F:polyribonucleotide nucleotidyltransferase activity"/>
    <property type="evidence" value="ECO:0007669"/>
    <property type="project" value="UniProtKB-UniRule"/>
</dbReference>
<dbReference type="GO" id="GO:0003723">
    <property type="term" value="F:RNA binding"/>
    <property type="evidence" value="ECO:0007669"/>
    <property type="project" value="UniProtKB-UniRule"/>
</dbReference>
<dbReference type="GO" id="GO:0006402">
    <property type="term" value="P:mRNA catabolic process"/>
    <property type="evidence" value="ECO:0007669"/>
    <property type="project" value="UniProtKB-UniRule"/>
</dbReference>
<dbReference type="GO" id="GO:0006396">
    <property type="term" value="P:RNA processing"/>
    <property type="evidence" value="ECO:0007669"/>
    <property type="project" value="InterPro"/>
</dbReference>
<dbReference type="CDD" id="cd02393">
    <property type="entry name" value="KH-I_PNPase"/>
    <property type="match status" value="1"/>
</dbReference>
<dbReference type="CDD" id="cd11363">
    <property type="entry name" value="RNase_PH_PNPase_1"/>
    <property type="match status" value="1"/>
</dbReference>
<dbReference type="CDD" id="cd11364">
    <property type="entry name" value="RNase_PH_PNPase_2"/>
    <property type="match status" value="1"/>
</dbReference>
<dbReference type="CDD" id="cd04472">
    <property type="entry name" value="S1_PNPase"/>
    <property type="match status" value="1"/>
</dbReference>
<dbReference type="FunFam" id="2.40.50.140:FF:000023">
    <property type="entry name" value="Polyribonucleotide nucleotidyltransferase"/>
    <property type="match status" value="1"/>
</dbReference>
<dbReference type="FunFam" id="3.30.1370.10:FF:000001">
    <property type="entry name" value="Polyribonucleotide nucleotidyltransferase"/>
    <property type="match status" value="1"/>
</dbReference>
<dbReference type="FunFam" id="3.30.230.70:FF:000001">
    <property type="entry name" value="Polyribonucleotide nucleotidyltransferase"/>
    <property type="match status" value="1"/>
</dbReference>
<dbReference type="FunFam" id="3.30.230.70:FF:000002">
    <property type="entry name" value="Polyribonucleotide nucleotidyltransferase"/>
    <property type="match status" value="1"/>
</dbReference>
<dbReference type="Gene3D" id="3.30.230.70">
    <property type="entry name" value="GHMP Kinase, N-terminal domain"/>
    <property type="match status" value="2"/>
</dbReference>
<dbReference type="Gene3D" id="3.30.1370.10">
    <property type="entry name" value="K Homology domain, type 1"/>
    <property type="match status" value="1"/>
</dbReference>
<dbReference type="Gene3D" id="2.40.50.140">
    <property type="entry name" value="Nucleic acid-binding proteins"/>
    <property type="match status" value="1"/>
</dbReference>
<dbReference type="HAMAP" id="MF_01595">
    <property type="entry name" value="PNPase"/>
    <property type="match status" value="1"/>
</dbReference>
<dbReference type="InterPro" id="IPR001247">
    <property type="entry name" value="ExoRNase_PH_dom1"/>
</dbReference>
<dbReference type="InterPro" id="IPR015847">
    <property type="entry name" value="ExoRNase_PH_dom2"/>
</dbReference>
<dbReference type="InterPro" id="IPR036345">
    <property type="entry name" value="ExoRNase_PH_dom2_sf"/>
</dbReference>
<dbReference type="InterPro" id="IPR004087">
    <property type="entry name" value="KH_dom"/>
</dbReference>
<dbReference type="InterPro" id="IPR004088">
    <property type="entry name" value="KH_dom_type_1"/>
</dbReference>
<dbReference type="InterPro" id="IPR036612">
    <property type="entry name" value="KH_dom_type_1_sf"/>
</dbReference>
<dbReference type="InterPro" id="IPR012340">
    <property type="entry name" value="NA-bd_OB-fold"/>
</dbReference>
<dbReference type="InterPro" id="IPR012162">
    <property type="entry name" value="PNPase"/>
</dbReference>
<dbReference type="InterPro" id="IPR027408">
    <property type="entry name" value="PNPase/RNase_PH_dom_sf"/>
</dbReference>
<dbReference type="InterPro" id="IPR015848">
    <property type="entry name" value="PNPase_PH_RNA-bd_bac/org-type"/>
</dbReference>
<dbReference type="InterPro" id="IPR020568">
    <property type="entry name" value="Ribosomal_Su5_D2-typ_SF"/>
</dbReference>
<dbReference type="InterPro" id="IPR003029">
    <property type="entry name" value="S1_domain"/>
</dbReference>
<dbReference type="NCBIfam" id="TIGR03591">
    <property type="entry name" value="polynuc_phos"/>
    <property type="match status" value="1"/>
</dbReference>
<dbReference type="NCBIfam" id="NF008805">
    <property type="entry name" value="PRK11824.1"/>
    <property type="match status" value="1"/>
</dbReference>
<dbReference type="PANTHER" id="PTHR11252">
    <property type="entry name" value="POLYRIBONUCLEOTIDE NUCLEOTIDYLTRANSFERASE"/>
    <property type="match status" value="1"/>
</dbReference>
<dbReference type="PANTHER" id="PTHR11252:SF0">
    <property type="entry name" value="POLYRIBONUCLEOTIDE NUCLEOTIDYLTRANSFERASE 1, MITOCHONDRIAL"/>
    <property type="match status" value="1"/>
</dbReference>
<dbReference type="Pfam" id="PF00013">
    <property type="entry name" value="KH_1"/>
    <property type="match status" value="1"/>
</dbReference>
<dbReference type="Pfam" id="PF03726">
    <property type="entry name" value="PNPase"/>
    <property type="match status" value="1"/>
</dbReference>
<dbReference type="Pfam" id="PF01138">
    <property type="entry name" value="RNase_PH"/>
    <property type="match status" value="2"/>
</dbReference>
<dbReference type="Pfam" id="PF03725">
    <property type="entry name" value="RNase_PH_C"/>
    <property type="match status" value="2"/>
</dbReference>
<dbReference type="Pfam" id="PF00575">
    <property type="entry name" value="S1"/>
    <property type="match status" value="1"/>
</dbReference>
<dbReference type="PIRSF" id="PIRSF005499">
    <property type="entry name" value="PNPase"/>
    <property type="match status" value="1"/>
</dbReference>
<dbReference type="SMART" id="SM00322">
    <property type="entry name" value="KH"/>
    <property type="match status" value="1"/>
</dbReference>
<dbReference type="SMART" id="SM00316">
    <property type="entry name" value="S1"/>
    <property type="match status" value="1"/>
</dbReference>
<dbReference type="SUPFAM" id="SSF54791">
    <property type="entry name" value="Eukaryotic type KH-domain (KH-domain type I)"/>
    <property type="match status" value="1"/>
</dbReference>
<dbReference type="SUPFAM" id="SSF50249">
    <property type="entry name" value="Nucleic acid-binding proteins"/>
    <property type="match status" value="1"/>
</dbReference>
<dbReference type="SUPFAM" id="SSF55666">
    <property type="entry name" value="Ribonuclease PH domain 2-like"/>
    <property type="match status" value="2"/>
</dbReference>
<dbReference type="SUPFAM" id="SSF54211">
    <property type="entry name" value="Ribosomal protein S5 domain 2-like"/>
    <property type="match status" value="2"/>
</dbReference>
<dbReference type="PROSITE" id="PS50084">
    <property type="entry name" value="KH_TYPE_1"/>
    <property type="match status" value="1"/>
</dbReference>
<dbReference type="PROSITE" id="PS50126">
    <property type="entry name" value="S1"/>
    <property type="match status" value="1"/>
</dbReference>
<gene>
    <name evidence="1" type="primary">pnp</name>
    <name type="ordered locus">Ent638_3601</name>
</gene>
<evidence type="ECO:0000255" key="1">
    <source>
        <dbReference type="HAMAP-Rule" id="MF_01595"/>
    </source>
</evidence>
<evidence type="ECO:0000256" key="2">
    <source>
        <dbReference type="SAM" id="MobiDB-lite"/>
    </source>
</evidence>
<sequence length="711" mass="76957">MLNPIVRKFQYGQHTVTLETGMMARQATAAVMVSMDDTAVFVTVVGQKKTKPGQDFFPLTVNYQERTYAAGKIPGGFFRREGRPSEGETLIARLIDRPVRPLFPEGFINEVQVIATVVSVNPQVNPDIVAMIGASAALSLSGLPFNGPIGSARVGYINDQYVLNPTQDELKESKLDLVVAGTEAAVLMVESEAELLSEDQMLGAVVFGHEQQQIVIENIKDLVKEAGKPRWDWQPEAVNEALNARVAALAEARLSDAYRITDKQERYAQIDVIKSETIATLVAEDESLDANELSEILHAIEKNAVRSRVLAGEPRIDGREKDMIRGLDVRTGVLPRTHGSALFTRGETQALVTATLGTARDAQNIDELMGDRTDSFLFHYNFPPYSVGETGMVGSPKRREIGHGRLAKRGVLAVMPEADKFPYTVRVVSEITESNGSSSMASVCGASLALMDAGVPIKAAVAGIAMGLVKEGDNFVVLSDILGDEDHLGDMDFKVAGSREGISALQMDIKIEGITKEIMQVALNQAKGARLHILGVMEQAINAPRGDISQFAPRIHTIKISPDKIKDVIGKGGSVIRALTEETGTTIEIEDDGTVKIAATDGEKAKFAIRRIEEITAEIEVGRIYNGKVTRIVDFGAFVAIGGGKEGLVHISQIADKRVEKVTDYLQMGQEVPVKVLEVDRQGRVRLSIKEATEQTQPAAAPEAPAAEQGE</sequence>
<feature type="chain" id="PRO_0000329635" description="Polyribonucleotide nucleotidyltransferase">
    <location>
        <begin position="1"/>
        <end position="711"/>
    </location>
</feature>
<feature type="domain" description="KH" evidence="1">
    <location>
        <begin position="553"/>
        <end position="612"/>
    </location>
</feature>
<feature type="domain" description="S1 motif" evidence="1">
    <location>
        <begin position="622"/>
        <end position="690"/>
    </location>
</feature>
<feature type="region of interest" description="Disordered" evidence="2">
    <location>
        <begin position="690"/>
        <end position="711"/>
    </location>
</feature>
<feature type="compositionally biased region" description="Low complexity" evidence="2">
    <location>
        <begin position="694"/>
        <end position="711"/>
    </location>
</feature>
<feature type="binding site" evidence="1">
    <location>
        <position position="486"/>
    </location>
    <ligand>
        <name>Mg(2+)</name>
        <dbReference type="ChEBI" id="CHEBI:18420"/>
    </ligand>
</feature>
<feature type="binding site" evidence="1">
    <location>
        <position position="492"/>
    </location>
    <ligand>
        <name>Mg(2+)</name>
        <dbReference type="ChEBI" id="CHEBI:18420"/>
    </ligand>
</feature>